<reference key="1">
    <citation type="journal article" date="2000" name="Eur. J. Biochem.">
        <title>Peptides with antimicrobial activity from four different families isolated from the skins of the North American frogs Rana luteiventris, Rana berlandieri and Rana pipiens.</title>
        <authorList>
            <person name="Goraya J."/>
            <person name="Wang Y."/>
            <person name="Li Z."/>
            <person name="O'Flaherty M."/>
            <person name="Knoop F.C."/>
            <person name="Platz J.E."/>
            <person name="Conlon J.M."/>
        </authorList>
    </citation>
    <scope>PROTEIN SEQUENCE</scope>
    <scope>FUNCTION</scope>
    <scope>MASS SPECTROMETRY</scope>
    <scope>SUBCELLULAR LOCATION</scope>
    <source>
        <tissue>Skin secretion</tissue>
    </source>
</reference>
<comment type="function">
    <text evidence="2">Antibacterial activity against Gram-positive bacterium S.aureus and Gram-negative bacterium E.coli. Has activity against C.albicans.</text>
</comment>
<comment type="subcellular location">
    <subcellularLocation>
        <location evidence="2">Secreted</location>
    </subcellularLocation>
</comment>
<comment type="tissue specificity">
    <text evidence="5">Expressed by the skin glands.</text>
</comment>
<comment type="mass spectrometry" mass="3835.4" method="Electrospray" evidence="2"/>
<comment type="similarity">
    <text evidence="4">Belongs to the frog skin active peptide (FSAP) family. Esculentin subfamily.</text>
</comment>
<comment type="online information" name="The antimicrobial peptide database">
    <link uri="https://wangapd3.com/database/query_output.php?ID=00662"/>
</comment>
<organism>
    <name type="scientific">Lithobates berlandieri</name>
    <name type="common">Rio Grande leopard frog</name>
    <name type="synonym">Rana berlandieri</name>
    <dbReference type="NCBI Taxonomy" id="30360"/>
    <lineage>
        <taxon>Eukaryota</taxon>
        <taxon>Metazoa</taxon>
        <taxon>Chordata</taxon>
        <taxon>Craniata</taxon>
        <taxon>Vertebrata</taxon>
        <taxon>Euteleostomi</taxon>
        <taxon>Amphibia</taxon>
        <taxon>Batrachia</taxon>
        <taxon>Anura</taxon>
        <taxon>Neobatrachia</taxon>
        <taxon>Ranoidea</taxon>
        <taxon>Ranidae</taxon>
        <taxon>Lithobates</taxon>
    </lineage>
</organism>
<sequence length="37" mass="3838">GLFSILRGAAKFASKGLGKDLTKLGVDLVACKISKQC</sequence>
<name>ES2B_LITBE</name>
<feature type="peptide" id="PRO_0000044647" description="Esculentin-2B" evidence="2">
    <location>
        <begin position="1"/>
        <end position="37"/>
    </location>
</feature>
<feature type="disulfide bond" evidence="1">
    <location>
        <begin position="31"/>
        <end position="37"/>
    </location>
</feature>
<protein>
    <recommendedName>
        <fullName evidence="3">Esculentin-2B</fullName>
    </recommendedName>
</protein>
<keyword id="KW-0878">Amphibian defense peptide</keyword>
<keyword id="KW-0044">Antibiotic</keyword>
<keyword id="KW-0929">Antimicrobial</keyword>
<keyword id="KW-0903">Direct protein sequencing</keyword>
<keyword id="KW-1015">Disulfide bond</keyword>
<keyword id="KW-0295">Fungicide</keyword>
<keyword id="KW-0964">Secreted</keyword>
<accession>P82839</accession>
<proteinExistence type="evidence at protein level"/>
<evidence type="ECO:0000250" key="1"/>
<evidence type="ECO:0000269" key="2">
    <source>
    </source>
</evidence>
<evidence type="ECO:0000303" key="3">
    <source>
    </source>
</evidence>
<evidence type="ECO:0000305" key="4"/>
<evidence type="ECO:0000305" key="5">
    <source>
    </source>
</evidence>
<dbReference type="SMR" id="P82839"/>
<dbReference type="GO" id="GO:0005576">
    <property type="term" value="C:extracellular region"/>
    <property type="evidence" value="ECO:0007669"/>
    <property type="project" value="UniProtKB-SubCell"/>
</dbReference>
<dbReference type="GO" id="GO:0050832">
    <property type="term" value="P:defense response to fungus"/>
    <property type="evidence" value="ECO:0007669"/>
    <property type="project" value="UniProtKB-KW"/>
</dbReference>
<dbReference type="GO" id="GO:0050829">
    <property type="term" value="P:defense response to Gram-negative bacterium"/>
    <property type="evidence" value="ECO:0007669"/>
    <property type="project" value="UniProtKB-ARBA"/>
</dbReference>
<dbReference type="GO" id="GO:0031640">
    <property type="term" value="P:killing of cells of another organism"/>
    <property type="evidence" value="ECO:0007669"/>
    <property type="project" value="UniProtKB-KW"/>
</dbReference>
<dbReference type="InterPro" id="IPR012521">
    <property type="entry name" value="Antimicrobial_frog_2"/>
</dbReference>
<dbReference type="Pfam" id="PF08023">
    <property type="entry name" value="Antimicrobial_2"/>
    <property type="match status" value="1"/>
</dbReference>